<organism>
    <name type="scientific">Panus similis</name>
    <name type="common">Lentinoid fungus</name>
    <name type="synonym">Lentinus similis</name>
    <dbReference type="NCBI Taxonomy" id="292560"/>
    <lineage>
        <taxon>Eukaryota</taxon>
        <taxon>Fungi</taxon>
        <taxon>Dikarya</taxon>
        <taxon>Basidiomycota</taxon>
        <taxon>Agaricomycotina</taxon>
        <taxon>Agaricomycetes</taxon>
        <taxon>Polyporales</taxon>
        <taxon>Panaceae</taxon>
        <taxon>Panus</taxon>
    </lineage>
</organism>
<name>LP9A_PANSI</name>
<dbReference type="EC" id="1.14.99.56" evidence="4 6 7 8"/>
<dbReference type="EMBL" id="KT368674">
    <property type="protein sequence ID" value="ALN96977.1"/>
    <property type="molecule type" value="Genomic_DNA"/>
</dbReference>
<dbReference type="PDB" id="5ACF">
    <property type="method" value="X-ray"/>
    <property type="resolution" value="1.80 A"/>
    <property type="chains" value="A=20-254"/>
</dbReference>
<dbReference type="PDB" id="5ACG">
    <property type="method" value="X-ray"/>
    <property type="resolution" value="1.91 A"/>
    <property type="chains" value="A=20-254"/>
</dbReference>
<dbReference type="PDB" id="5ACH">
    <property type="method" value="X-ray"/>
    <property type="resolution" value="1.28 A"/>
    <property type="chains" value="A=20-254"/>
</dbReference>
<dbReference type="PDB" id="5ACI">
    <property type="method" value="X-ray"/>
    <property type="resolution" value="1.75 A"/>
    <property type="chains" value="A=20-254"/>
</dbReference>
<dbReference type="PDB" id="5ACJ">
    <property type="method" value="X-ray"/>
    <property type="resolution" value="1.70 A"/>
    <property type="chains" value="A=20-254"/>
</dbReference>
<dbReference type="PDB" id="5N04">
    <property type="method" value="X-ray"/>
    <property type="resolution" value="1.76 A"/>
    <property type="chains" value="A=20-254"/>
</dbReference>
<dbReference type="PDB" id="5N05">
    <property type="method" value="X-ray"/>
    <property type="resolution" value="1.58 A"/>
    <property type="chains" value="A=20-254"/>
</dbReference>
<dbReference type="PDB" id="5NKW">
    <property type="method" value="X-ray"/>
    <property type="resolution" value="1.48 A"/>
    <property type="chains" value="A=20-254"/>
</dbReference>
<dbReference type="PDB" id="5NLN">
    <property type="method" value="X-ray"/>
    <property type="resolution" value="1.90 A"/>
    <property type="chains" value="A=20-254"/>
</dbReference>
<dbReference type="PDB" id="5NLO">
    <property type="method" value="X-ray"/>
    <property type="resolution" value="1.33 A"/>
    <property type="chains" value="A=20-254"/>
</dbReference>
<dbReference type="PDB" id="5NLP">
    <property type="method" value="X-ray"/>
    <property type="resolution" value="1.59 A"/>
    <property type="chains" value="A=20-254"/>
</dbReference>
<dbReference type="PDB" id="5NLQ">
    <property type="method" value="X-ray"/>
    <property type="resolution" value="1.50 A"/>
    <property type="chains" value="A=20-254"/>
</dbReference>
<dbReference type="PDB" id="5NLR">
    <property type="method" value="X-ray"/>
    <property type="resolution" value="2.00 A"/>
    <property type="chains" value="A=20-254"/>
</dbReference>
<dbReference type="PDB" id="5NLS">
    <property type="method" value="X-ray"/>
    <property type="resolution" value="1.75 A"/>
    <property type="chains" value="A=20-254"/>
</dbReference>
<dbReference type="PDB" id="6YDG">
    <property type="method" value="X-ray"/>
    <property type="resolution" value="1.90 A"/>
    <property type="chains" value="A=20-254"/>
</dbReference>
<dbReference type="PDB" id="7NIM">
    <property type="method" value="X-ray"/>
    <property type="resolution" value="1.45 A"/>
    <property type="chains" value="A=20-254"/>
</dbReference>
<dbReference type="PDB" id="7NIN">
    <property type="method" value="X-ray"/>
    <property type="resolution" value="1.40 A"/>
    <property type="chains" value="A=20-254"/>
</dbReference>
<dbReference type="PDB" id="7PQR">
    <property type="method" value="X-ray"/>
    <property type="resolution" value="1.30 A"/>
    <property type="chains" value="A=20-254"/>
</dbReference>
<dbReference type="PDB" id="7PTZ">
    <property type="method" value="X-ray"/>
    <property type="resolution" value="1.09 A"/>
    <property type="chains" value="AAA=20-254"/>
</dbReference>
<dbReference type="PDB" id="7PXI">
    <property type="method" value="X-ray"/>
    <property type="resolution" value="1.63 A"/>
    <property type="chains" value="A=20-254"/>
</dbReference>
<dbReference type="PDB" id="7PXJ">
    <property type="method" value="X-ray"/>
    <property type="resolution" value="1.75 A"/>
    <property type="chains" value="A=20-254"/>
</dbReference>
<dbReference type="PDB" id="7PXK">
    <property type="method" value="X-ray"/>
    <property type="resolution" value="1.40 A"/>
    <property type="chains" value="A=20-254"/>
</dbReference>
<dbReference type="PDB" id="7PXL">
    <property type="method" value="X-ray"/>
    <property type="resolution" value="1.35 A"/>
    <property type="chains" value="A=20-254"/>
</dbReference>
<dbReference type="PDB" id="7PXM">
    <property type="method" value="X-ray"/>
    <property type="resolution" value="1.30 A"/>
    <property type="chains" value="A=20-254"/>
</dbReference>
<dbReference type="PDB" id="7PXN">
    <property type="method" value="X-ray"/>
    <property type="resolution" value="1.65 A"/>
    <property type="chains" value="A=20-254"/>
</dbReference>
<dbReference type="PDB" id="7PXR">
    <property type="method" value="X-ray"/>
    <property type="resolution" value="1.80 A"/>
    <property type="chains" value="A=20-254"/>
</dbReference>
<dbReference type="PDB" id="7PXS">
    <property type="method" value="X-ray"/>
    <property type="resolution" value="1.90 A"/>
    <property type="chains" value="A=20-254"/>
</dbReference>
<dbReference type="PDB" id="7PXT">
    <property type="method" value="X-ray"/>
    <property type="resolution" value="2.40 A"/>
    <property type="chains" value="A=20-254"/>
</dbReference>
<dbReference type="PDB" id="7PXU">
    <property type="method" value="X-ray"/>
    <property type="resolution" value="1.80 A"/>
    <property type="chains" value="A=20-254"/>
</dbReference>
<dbReference type="PDB" id="7PXV">
    <property type="method" value="X-ray"/>
    <property type="resolution" value="1.50 A"/>
    <property type="chains" value="A=20-254"/>
</dbReference>
<dbReference type="PDB" id="7PXW">
    <property type="method" value="X-ray"/>
    <property type="resolution" value="1.40 A"/>
    <property type="chains" value="A=20-254"/>
</dbReference>
<dbReference type="PDB" id="7PYD">
    <property type="method" value="X-ray"/>
    <property type="resolution" value="2.21 A"/>
    <property type="chains" value="A=20-254"/>
</dbReference>
<dbReference type="PDB" id="7PYE">
    <property type="method" value="X-ray"/>
    <property type="resolution" value="2.10 A"/>
    <property type="chains" value="A=20-254"/>
</dbReference>
<dbReference type="PDB" id="7PYF">
    <property type="method" value="X-ray"/>
    <property type="resolution" value="1.90 A"/>
    <property type="chains" value="A=20-254"/>
</dbReference>
<dbReference type="PDB" id="7PYG">
    <property type="method" value="X-ray"/>
    <property type="resolution" value="1.90 A"/>
    <property type="chains" value="A=20-254"/>
</dbReference>
<dbReference type="PDB" id="7PYH">
    <property type="method" value="X-ray"/>
    <property type="resolution" value="1.90 A"/>
    <property type="chains" value="A=20-254"/>
</dbReference>
<dbReference type="PDB" id="7PYI">
    <property type="method" value="X-ray"/>
    <property type="resolution" value="2.05 A"/>
    <property type="chains" value="A=20-254"/>
</dbReference>
<dbReference type="PDB" id="7PYL">
    <property type="method" value="X-ray"/>
    <property type="resolution" value="1.70 A"/>
    <property type="chains" value="A=20-254"/>
</dbReference>
<dbReference type="PDB" id="7PYM">
    <property type="method" value="X-ray"/>
    <property type="resolution" value="1.75 A"/>
    <property type="chains" value="A=20-254"/>
</dbReference>
<dbReference type="PDB" id="7PYN">
    <property type="method" value="X-ray"/>
    <property type="resolution" value="1.40 A"/>
    <property type="chains" value="A=20-254"/>
</dbReference>
<dbReference type="PDB" id="7PYO">
    <property type="method" value="X-ray"/>
    <property type="resolution" value="1.40 A"/>
    <property type="chains" value="A=20-254"/>
</dbReference>
<dbReference type="PDB" id="7PYP">
    <property type="method" value="X-ray"/>
    <property type="resolution" value="1.60 A"/>
    <property type="chains" value="A=20-254"/>
</dbReference>
<dbReference type="PDB" id="7PYQ">
    <property type="method" value="X-ray"/>
    <property type="resolution" value="1.60 A"/>
    <property type="chains" value="A=20-254"/>
</dbReference>
<dbReference type="PDB" id="7PYU">
    <property type="method" value="X-ray"/>
    <property type="resolution" value="1.40 A"/>
    <property type="chains" value="A=20-254"/>
</dbReference>
<dbReference type="PDB" id="7PYW">
    <property type="method" value="X-ray"/>
    <property type="resolution" value="1.40 A"/>
    <property type="chains" value="A=20-254"/>
</dbReference>
<dbReference type="PDB" id="7PYX">
    <property type="method" value="X-ray"/>
    <property type="resolution" value="1.60 A"/>
    <property type="chains" value="A=20-254"/>
</dbReference>
<dbReference type="PDB" id="7PYY">
    <property type="method" value="X-ray"/>
    <property type="resolution" value="1.20 A"/>
    <property type="chains" value="A=20-254"/>
</dbReference>
<dbReference type="PDB" id="7PYZ">
    <property type="method" value="X-ray"/>
    <property type="resolution" value="1.60 A"/>
    <property type="chains" value="A=20-254"/>
</dbReference>
<dbReference type="PDB" id="7PZ0">
    <property type="method" value="X-ray"/>
    <property type="resolution" value="1.20 A"/>
    <property type="chains" value="A=20-254"/>
</dbReference>
<dbReference type="PDB" id="8E1W">
    <property type="method" value="Other"/>
    <property type="resolution" value="2.10 A"/>
    <property type="chains" value="A=20-254"/>
</dbReference>
<dbReference type="PDB" id="8S3F">
    <property type="method" value="X-ray"/>
    <property type="resolution" value="1.76 A"/>
    <property type="chains" value="A=20-254"/>
</dbReference>
<dbReference type="PDB" id="8S3L">
    <property type="method" value="X-ray"/>
    <property type="resolution" value="2.60 A"/>
    <property type="chains" value="A=20-254"/>
</dbReference>
<dbReference type="PDBsum" id="5ACF"/>
<dbReference type="PDBsum" id="5ACG"/>
<dbReference type="PDBsum" id="5ACH"/>
<dbReference type="PDBsum" id="5ACI"/>
<dbReference type="PDBsum" id="5ACJ"/>
<dbReference type="PDBsum" id="5N04"/>
<dbReference type="PDBsum" id="5N05"/>
<dbReference type="PDBsum" id="5NKW"/>
<dbReference type="PDBsum" id="5NLN"/>
<dbReference type="PDBsum" id="5NLO"/>
<dbReference type="PDBsum" id="5NLP"/>
<dbReference type="PDBsum" id="5NLQ"/>
<dbReference type="PDBsum" id="5NLR"/>
<dbReference type="PDBsum" id="5NLS"/>
<dbReference type="PDBsum" id="6YDG"/>
<dbReference type="PDBsum" id="7NIM"/>
<dbReference type="PDBsum" id="7NIN"/>
<dbReference type="PDBsum" id="7PQR"/>
<dbReference type="PDBsum" id="7PTZ"/>
<dbReference type="PDBsum" id="7PXI"/>
<dbReference type="PDBsum" id="7PXJ"/>
<dbReference type="PDBsum" id="7PXK"/>
<dbReference type="PDBsum" id="7PXL"/>
<dbReference type="PDBsum" id="7PXM"/>
<dbReference type="PDBsum" id="7PXN"/>
<dbReference type="PDBsum" id="7PXR"/>
<dbReference type="PDBsum" id="7PXS"/>
<dbReference type="PDBsum" id="7PXT"/>
<dbReference type="PDBsum" id="7PXU"/>
<dbReference type="PDBsum" id="7PXV"/>
<dbReference type="PDBsum" id="7PXW"/>
<dbReference type="PDBsum" id="7PYD"/>
<dbReference type="PDBsum" id="7PYE"/>
<dbReference type="PDBsum" id="7PYF"/>
<dbReference type="PDBsum" id="7PYG"/>
<dbReference type="PDBsum" id="7PYH"/>
<dbReference type="PDBsum" id="7PYI"/>
<dbReference type="PDBsum" id="7PYL"/>
<dbReference type="PDBsum" id="7PYM"/>
<dbReference type="PDBsum" id="7PYN"/>
<dbReference type="PDBsum" id="7PYO"/>
<dbReference type="PDBsum" id="7PYP"/>
<dbReference type="PDBsum" id="7PYQ"/>
<dbReference type="PDBsum" id="7PYU"/>
<dbReference type="PDBsum" id="7PYW"/>
<dbReference type="PDBsum" id="7PYX"/>
<dbReference type="PDBsum" id="7PYY"/>
<dbReference type="PDBsum" id="7PYZ"/>
<dbReference type="PDBsum" id="7PZ0"/>
<dbReference type="PDBsum" id="8E1W"/>
<dbReference type="PDBsum" id="8S3F"/>
<dbReference type="PDBsum" id="8S3L"/>
<dbReference type="SMR" id="A0A0S2GKZ1"/>
<dbReference type="BRENDA" id="1.14.99.53">
    <property type="organism ID" value="15004"/>
</dbReference>
<dbReference type="BRENDA" id="1.14.99.54">
    <property type="organism ID" value="15004"/>
</dbReference>
<dbReference type="BRENDA" id="1.14.99.56">
    <property type="organism ID" value="15004"/>
</dbReference>
<dbReference type="BRENDA" id="1.14.99.B10">
    <property type="organism ID" value="15004"/>
</dbReference>
<dbReference type="EvolutionaryTrace" id="A0A0S2GKZ1"/>
<dbReference type="GO" id="GO:0005576">
    <property type="term" value="C:extracellular region"/>
    <property type="evidence" value="ECO:0007669"/>
    <property type="project" value="UniProtKB-SubCell"/>
</dbReference>
<dbReference type="GO" id="GO:0046872">
    <property type="term" value="F:metal ion binding"/>
    <property type="evidence" value="ECO:0007669"/>
    <property type="project" value="UniProtKB-KW"/>
</dbReference>
<dbReference type="GO" id="GO:0004497">
    <property type="term" value="F:monooxygenase activity"/>
    <property type="evidence" value="ECO:0007669"/>
    <property type="project" value="UniProtKB-KW"/>
</dbReference>
<dbReference type="GO" id="GO:0030245">
    <property type="term" value="P:cellulose catabolic process"/>
    <property type="evidence" value="ECO:0007669"/>
    <property type="project" value="UniProtKB-KW"/>
</dbReference>
<dbReference type="CDD" id="cd21175">
    <property type="entry name" value="LPMO_AA9"/>
    <property type="match status" value="1"/>
</dbReference>
<dbReference type="Gene3D" id="2.70.50.70">
    <property type="match status" value="1"/>
</dbReference>
<dbReference type="InterPro" id="IPR049892">
    <property type="entry name" value="AA9"/>
</dbReference>
<dbReference type="InterPro" id="IPR005103">
    <property type="entry name" value="AA9_LPMO"/>
</dbReference>
<dbReference type="PANTHER" id="PTHR33353:SF17">
    <property type="entry name" value="ENDO-BETA-1,4-GLUCANASE D"/>
    <property type="match status" value="1"/>
</dbReference>
<dbReference type="PANTHER" id="PTHR33353">
    <property type="entry name" value="PUTATIVE (AFU_ORTHOLOGUE AFUA_1G12560)-RELATED"/>
    <property type="match status" value="1"/>
</dbReference>
<dbReference type="Pfam" id="PF03443">
    <property type="entry name" value="AA9"/>
    <property type="match status" value="1"/>
</dbReference>
<keyword id="KW-0002">3D-structure</keyword>
<keyword id="KW-0119">Carbohydrate metabolism</keyword>
<keyword id="KW-0136">Cellulose degradation</keyword>
<keyword id="KW-0186">Copper</keyword>
<keyword id="KW-1015">Disulfide bond</keyword>
<keyword id="KW-0325">Glycoprotein</keyword>
<keyword id="KW-0479">Metal-binding</keyword>
<keyword id="KW-0488">Methylation</keyword>
<keyword id="KW-0503">Monooxygenase</keyword>
<keyword id="KW-0560">Oxidoreductase</keyword>
<keyword id="KW-0624">Polysaccharide degradation</keyword>
<keyword id="KW-0964">Secreted</keyword>
<keyword id="KW-0732">Signal</keyword>
<feature type="signal peptide" evidence="3">
    <location>
        <begin position="1"/>
        <end position="19"/>
    </location>
</feature>
<feature type="chain" id="PRO_5006598897" description="AA9 family lytic polysaccharide monooxygenase A">
    <location>
        <begin position="20"/>
        <end position="254"/>
    </location>
</feature>
<feature type="binding site" evidence="4 5 6 7 8 9 10 20 21 25 28 29 30 37 46 48 49 50 57 58 59 60 61 62 63 64 65 66 67 68">
    <location>
        <position position="20"/>
    </location>
    <ligand>
        <name>Cu(2+)</name>
        <dbReference type="ChEBI" id="CHEBI:29036"/>
        <note>catalytic</note>
    </ligand>
</feature>
<feature type="binding site" evidence="15 16 17 18 19 20 26 27 34 68">
    <location>
        <position position="28"/>
    </location>
    <ligand>
        <name>(1,4-beta-D-glucosyl)n</name>
        <dbReference type="ChEBI" id="CHEBI:18246"/>
    </ligand>
</feature>
<feature type="binding site" evidence="15 16 17 18 19 20 23 24 26 27 34 68">
    <location>
        <position position="66"/>
    </location>
    <ligand>
        <name>(1,4-beta-D-glucosyl)n</name>
        <dbReference type="ChEBI" id="CHEBI:18246"/>
    </ligand>
</feature>
<feature type="binding site" evidence="15 16 17 18 19 20 23 24 26 27 34 68">
    <location>
        <position position="67"/>
    </location>
    <ligand>
        <name>(1,4-beta-D-glucosyl)n</name>
        <dbReference type="ChEBI" id="CHEBI:18246"/>
    </ligand>
</feature>
<feature type="binding site" evidence="15 16 17 18 19 20 23 24 26 27 34 68">
    <location>
        <position position="77"/>
    </location>
    <ligand>
        <name>(1,4-beta-D-glucosyl)n</name>
        <dbReference type="ChEBI" id="CHEBI:18246"/>
    </ligand>
</feature>
<feature type="binding site" evidence="17 28 30">
    <location>
        <position position="86"/>
    </location>
    <ligand>
        <name>(1,4-beta-D-glucosyl)n</name>
        <dbReference type="ChEBI" id="CHEBI:18246"/>
    </ligand>
</feature>
<feature type="binding site" evidence="4 5 6 7 8 9 10 20 21 28 29 30 37 46 48 49 50 57 58 59 60 61 62 63 64 65 66 67 68">
    <location>
        <position position="97"/>
    </location>
    <ligand>
        <name>Cu(2+)</name>
        <dbReference type="ChEBI" id="CHEBI:29036"/>
        <note>catalytic</note>
    </ligand>
</feature>
<feature type="binding site" evidence="15 16 17 18 23 26 27 34">
    <location>
        <position position="148"/>
    </location>
    <ligand>
        <name>(1,4-beta-D-glucosyl)n</name>
        <dbReference type="ChEBI" id="CHEBI:18246"/>
    </ligand>
</feature>
<feature type="binding site" evidence="15 17 18 23 27 34">
    <location>
        <position position="159"/>
    </location>
    <ligand>
        <name>(1,4-beta-D-glucosyl)n</name>
        <dbReference type="ChEBI" id="CHEBI:18246"/>
    </ligand>
</feature>
<feature type="binding site" evidence="2">
    <location>
        <position position="166"/>
    </location>
    <ligand>
        <name>O2</name>
        <dbReference type="ChEBI" id="CHEBI:15379"/>
    </ligand>
</feature>
<feature type="binding site" evidence="2">
    <location>
        <position position="181"/>
    </location>
    <ligand>
        <name>O2</name>
        <dbReference type="ChEBI" id="CHEBI:15379"/>
    </ligand>
</feature>
<feature type="binding site" evidence="4 5 6 7 8 9 10 20 25 37 50 57 58 59 60 61 62 63 64 65 66 67 68">
    <location>
        <position position="183"/>
    </location>
    <ligand>
        <name>Cu(2+)</name>
        <dbReference type="ChEBI" id="CHEBI:29036"/>
        <note>catalytic</note>
    </ligand>
</feature>
<feature type="modified residue" description="Methylhistidine" evidence="12">
    <location>
        <position position="20"/>
    </location>
</feature>
<feature type="glycosylation site" description="N-linked (GlcNAc...) asparagine" evidence="4 5 6 7 8 10 20 21 22 23 24 25 26 27 28 29 30 31 32 33 34 35 36 39 40 41 42 43 44 45 46 47 48 49 51 52 53 54 55 56">
    <location>
        <position position="52"/>
    </location>
</feature>
<feature type="glycosylation site" description="N-linked (GlcNAc...) asparagine" evidence="6 29">
    <location>
        <position position="129"/>
    </location>
</feature>
<feature type="disulfide bond" evidence="4 5 6 7 8 9 10 11 20 21 22 23 24 25 26 27 28 29 30 31 32 33 34 35 36 37 38 39 40 41 42 43 45 46 47 48 50 51 52 53 54 55 56 57 58 59 60 61 62 63 64 65 66 67 69">
    <location>
        <begin position="60"/>
        <end position="186"/>
    </location>
</feature>
<feature type="strand" evidence="71">
    <location>
        <begin position="22"/>
        <end position="28"/>
    </location>
</feature>
<feature type="strand" evidence="70">
    <location>
        <begin position="31"/>
        <end position="35"/>
    </location>
</feature>
<feature type="turn" evidence="71">
    <location>
        <begin position="38"/>
        <end position="40"/>
    </location>
</feature>
<feature type="strand" evidence="71">
    <location>
        <begin position="45"/>
        <end position="47"/>
    </location>
</feature>
<feature type="helix" evidence="71">
    <location>
        <begin position="56"/>
        <end position="58"/>
    </location>
</feature>
<feature type="strand" evidence="71">
    <location>
        <begin position="71"/>
        <end position="73"/>
    </location>
</feature>
<feature type="strand" evidence="71">
    <location>
        <begin position="78"/>
        <end position="87"/>
    </location>
</feature>
<feature type="strand" evidence="71">
    <location>
        <begin position="101"/>
        <end position="107"/>
    </location>
</feature>
<feature type="helix" evidence="71">
    <location>
        <begin position="108"/>
        <end position="110"/>
    </location>
</feature>
<feature type="strand" evidence="71">
    <location>
        <begin position="117"/>
        <end position="123"/>
    </location>
</feature>
<feature type="turn" evidence="71">
    <location>
        <begin position="127"/>
        <end position="130"/>
    </location>
</feature>
<feature type="helix" evidence="71">
    <location>
        <begin position="133"/>
        <end position="139"/>
    </location>
</feature>
<feature type="turn" evidence="71">
    <location>
        <begin position="140"/>
        <end position="142"/>
    </location>
</feature>
<feature type="strand" evidence="71">
    <location>
        <begin position="143"/>
        <end position="147"/>
    </location>
</feature>
<feature type="strand" evidence="71">
    <location>
        <begin position="153"/>
        <end position="164"/>
    </location>
</feature>
<feature type="turn" evidence="71">
    <location>
        <begin position="166"/>
        <end position="169"/>
    </location>
</feature>
<feature type="turn" evidence="71">
    <location>
        <begin position="172"/>
        <end position="174"/>
    </location>
</feature>
<feature type="strand" evidence="71">
    <location>
        <begin position="181"/>
        <end position="191"/>
    </location>
</feature>
<feature type="turn" evidence="71">
    <location>
        <begin position="206"/>
        <end position="208"/>
    </location>
</feature>
<feature type="turn" evidence="71">
    <location>
        <begin position="215"/>
        <end position="217"/>
    </location>
</feature>
<feature type="turn" evidence="71">
    <location>
        <begin position="221"/>
        <end position="223"/>
    </location>
</feature>
<feature type="helix" evidence="71">
    <location>
        <begin position="226"/>
        <end position="228"/>
    </location>
</feature>
<feature type="strand" evidence="71">
    <location>
        <begin position="243"/>
        <end position="246"/>
    </location>
</feature>
<feature type="helix" evidence="71">
    <location>
        <begin position="251"/>
        <end position="253"/>
    </location>
</feature>
<accession>A0A0S2GKZ1</accession>
<evidence type="ECO:0000250" key="1">
    <source>
        <dbReference type="UniProtKB" id="G2QCJ3"/>
    </source>
</evidence>
<evidence type="ECO:0000250" key="2">
    <source>
        <dbReference type="UniProtKB" id="Q1K8B6"/>
    </source>
</evidence>
<evidence type="ECO:0000255" key="3"/>
<evidence type="ECO:0000269" key="4">
    <source>
    </source>
</evidence>
<evidence type="ECO:0000269" key="5">
    <source>
    </source>
</evidence>
<evidence type="ECO:0000269" key="6">
    <source>
    </source>
</evidence>
<evidence type="ECO:0000269" key="7">
    <source>
    </source>
</evidence>
<evidence type="ECO:0000269" key="8">
    <source>
    </source>
</evidence>
<evidence type="ECO:0000269" key="9">
    <source>
    </source>
</evidence>
<evidence type="ECO:0000269" key="10">
    <source>
    </source>
</evidence>
<evidence type="ECO:0000269" key="11">
    <source>
    </source>
</evidence>
<evidence type="ECO:0000269" key="12">
    <source>
    </source>
</evidence>
<evidence type="ECO:0000303" key="13">
    <source>
    </source>
</evidence>
<evidence type="ECO:0000305" key="14"/>
<evidence type="ECO:0000305" key="15">
    <source>
    </source>
</evidence>
<evidence type="ECO:0000305" key="16">
    <source>
    </source>
</evidence>
<evidence type="ECO:0000305" key="17">
    <source>
    </source>
</evidence>
<evidence type="ECO:0000305" key="18">
    <source>
    </source>
</evidence>
<evidence type="ECO:0000305" key="19">
    <source>
    </source>
</evidence>
<evidence type="ECO:0007744" key="20">
    <source>
        <dbReference type="PDB" id="5ACF"/>
    </source>
</evidence>
<evidence type="ECO:0007744" key="21">
    <source>
        <dbReference type="PDB" id="5ACG"/>
    </source>
</evidence>
<evidence type="ECO:0007744" key="22">
    <source>
        <dbReference type="PDB" id="5ACH"/>
    </source>
</evidence>
<evidence type="ECO:0007744" key="23">
    <source>
        <dbReference type="PDB" id="5ACI"/>
    </source>
</evidence>
<evidence type="ECO:0007744" key="24">
    <source>
        <dbReference type="PDB" id="5ACJ"/>
    </source>
</evidence>
<evidence type="ECO:0007744" key="25">
    <source>
        <dbReference type="PDB" id="5N04"/>
    </source>
</evidence>
<evidence type="ECO:0007744" key="26">
    <source>
        <dbReference type="PDB" id="5N05"/>
    </source>
</evidence>
<evidence type="ECO:0007744" key="27">
    <source>
        <dbReference type="PDB" id="5NKW"/>
    </source>
</evidence>
<evidence type="ECO:0007744" key="28">
    <source>
        <dbReference type="PDB" id="5NLN"/>
    </source>
</evidence>
<evidence type="ECO:0007744" key="29">
    <source>
        <dbReference type="PDB" id="5NLO"/>
    </source>
</evidence>
<evidence type="ECO:0007744" key="30">
    <source>
        <dbReference type="PDB" id="5NLP"/>
    </source>
</evidence>
<evidence type="ECO:0007744" key="31">
    <source>
        <dbReference type="PDB" id="5NLQ"/>
    </source>
</evidence>
<evidence type="ECO:0007744" key="32">
    <source>
        <dbReference type="PDB" id="5NLR"/>
    </source>
</evidence>
<evidence type="ECO:0007744" key="33">
    <source>
        <dbReference type="PDB" id="5NLS"/>
    </source>
</evidence>
<evidence type="ECO:0007744" key="34">
    <source>
        <dbReference type="PDB" id="6YDG"/>
    </source>
</evidence>
<evidence type="ECO:0007744" key="35">
    <source>
        <dbReference type="PDB" id="7NIM"/>
    </source>
</evidence>
<evidence type="ECO:0007744" key="36">
    <source>
        <dbReference type="PDB" id="7NIN"/>
    </source>
</evidence>
<evidence type="ECO:0007744" key="37">
    <source>
        <dbReference type="PDB" id="7PQR"/>
    </source>
</evidence>
<evidence type="ECO:0007744" key="38">
    <source>
        <dbReference type="PDB" id="7PTZ"/>
    </source>
</evidence>
<evidence type="ECO:0007744" key="39">
    <source>
        <dbReference type="PDB" id="7PXI"/>
    </source>
</evidence>
<evidence type="ECO:0007744" key="40">
    <source>
        <dbReference type="PDB" id="7PXJ"/>
    </source>
</evidence>
<evidence type="ECO:0007744" key="41">
    <source>
        <dbReference type="PDB" id="7PXK"/>
    </source>
</evidence>
<evidence type="ECO:0007744" key="42">
    <source>
        <dbReference type="PDB" id="7PXL"/>
    </source>
</evidence>
<evidence type="ECO:0007744" key="43">
    <source>
        <dbReference type="PDB" id="7PXM"/>
    </source>
</evidence>
<evidence type="ECO:0007744" key="44">
    <source>
        <dbReference type="PDB" id="7PXN"/>
    </source>
</evidence>
<evidence type="ECO:0007744" key="45">
    <source>
        <dbReference type="PDB" id="7PXR"/>
    </source>
</evidence>
<evidence type="ECO:0007744" key="46">
    <source>
        <dbReference type="PDB" id="7PXS"/>
    </source>
</evidence>
<evidence type="ECO:0007744" key="47">
    <source>
        <dbReference type="PDB" id="7PXT"/>
    </source>
</evidence>
<evidence type="ECO:0007744" key="48">
    <source>
        <dbReference type="PDB" id="7PXU"/>
    </source>
</evidence>
<evidence type="ECO:0007744" key="49">
    <source>
        <dbReference type="PDB" id="7PXV"/>
    </source>
</evidence>
<evidence type="ECO:0007744" key="50">
    <source>
        <dbReference type="PDB" id="7PXW"/>
    </source>
</evidence>
<evidence type="ECO:0007744" key="51">
    <source>
        <dbReference type="PDB" id="7PYD"/>
    </source>
</evidence>
<evidence type="ECO:0007744" key="52">
    <source>
        <dbReference type="PDB" id="7PYE"/>
    </source>
</evidence>
<evidence type="ECO:0007744" key="53">
    <source>
        <dbReference type="PDB" id="7PYF"/>
    </source>
</evidence>
<evidence type="ECO:0007744" key="54">
    <source>
        <dbReference type="PDB" id="7PYG"/>
    </source>
</evidence>
<evidence type="ECO:0007744" key="55">
    <source>
        <dbReference type="PDB" id="7PYH"/>
    </source>
</evidence>
<evidence type="ECO:0007744" key="56">
    <source>
        <dbReference type="PDB" id="7PYI"/>
    </source>
</evidence>
<evidence type="ECO:0007744" key="57">
    <source>
        <dbReference type="PDB" id="7PYL"/>
    </source>
</evidence>
<evidence type="ECO:0007744" key="58">
    <source>
        <dbReference type="PDB" id="7PYM"/>
    </source>
</evidence>
<evidence type="ECO:0007744" key="59">
    <source>
        <dbReference type="PDB" id="7PYN"/>
    </source>
</evidence>
<evidence type="ECO:0007744" key="60">
    <source>
        <dbReference type="PDB" id="7PYO"/>
    </source>
</evidence>
<evidence type="ECO:0007744" key="61">
    <source>
        <dbReference type="PDB" id="7PYP"/>
    </source>
</evidence>
<evidence type="ECO:0007744" key="62">
    <source>
        <dbReference type="PDB" id="7PYQ"/>
    </source>
</evidence>
<evidence type="ECO:0007744" key="63">
    <source>
        <dbReference type="PDB" id="7PYU"/>
    </source>
</evidence>
<evidence type="ECO:0007744" key="64">
    <source>
        <dbReference type="PDB" id="7PYW"/>
    </source>
</evidence>
<evidence type="ECO:0007744" key="65">
    <source>
        <dbReference type="PDB" id="7PYX"/>
    </source>
</evidence>
<evidence type="ECO:0007744" key="66">
    <source>
        <dbReference type="PDB" id="7PYY"/>
    </source>
</evidence>
<evidence type="ECO:0007744" key="67">
    <source>
        <dbReference type="PDB" id="7PYZ"/>
    </source>
</evidence>
<evidence type="ECO:0007744" key="68">
    <source>
        <dbReference type="PDB" id="7PZ0"/>
    </source>
</evidence>
<evidence type="ECO:0007744" key="69">
    <source>
        <dbReference type="PDB" id="8E1W"/>
    </source>
</evidence>
<evidence type="ECO:0007829" key="70">
    <source>
        <dbReference type="PDB" id="7PXL"/>
    </source>
</evidence>
<evidence type="ECO:0007829" key="71">
    <source>
        <dbReference type="PDB" id="7PYY"/>
    </source>
</evidence>
<reference key="1">
    <citation type="submission" date="2015-08" db="EMBL/GenBank/DDBJ databases">
        <authorList>
            <person name="Babu N.S."/>
            <person name="Beckwith C.J."/>
            <person name="Beseler K.G."/>
            <person name="Brison A."/>
            <person name="Carone J.V."/>
            <person name="Caskin T.P."/>
            <person name="Diamond M."/>
            <person name="Durham M.E."/>
            <person name="Foxe J.M."/>
            <person name="Go M."/>
            <person name="Henderson B.A."/>
            <person name="Jones I.B."/>
            <person name="McGettigan J.A."/>
            <person name="Micheletti S.J."/>
            <person name="Nasrallah M.E."/>
            <person name="Ortiz D."/>
            <person name="Piller C.R."/>
            <person name="Privatt S.R."/>
            <person name="Schneider S.L."/>
            <person name="Sharp S."/>
            <person name="Smith T.C."/>
            <person name="Stanton J.D."/>
            <person name="Ullery H.E."/>
            <person name="Wilson R.J."/>
            <person name="Serrano M.G."/>
            <person name="Buck G."/>
            <person name="Lee V."/>
            <person name="Wang Y."/>
            <person name="Carvalho R."/>
            <person name="Voegtly L."/>
            <person name="Shi R."/>
            <person name="Duckworth R."/>
            <person name="Johnson A."/>
            <person name="Loviza R."/>
            <person name="Walstead R."/>
            <person name="Shah Z."/>
            <person name="Kiflezghi M."/>
            <person name="Wade K."/>
            <person name="Ball S.L."/>
            <person name="Bradley K.W."/>
            <person name="Asai D.J."/>
            <person name="Bowman C.A."/>
            <person name="Russell D.A."/>
            <person name="Pope W.H."/>
            <person name="Jacobs-Sera D."/>
            <person name="Hendrix R.W."/>
            <person name="Hatfull G.F."/>
        </authorList>
    </citation>
    <scope>NUCLEOTIDE SEQUENCE [GENOMIC DNA]</scope>
    <source>
        <strain>MS02030</strain>
    </source>
</reference>
<reference evidence="20 21 22 23 24" key="2">
    <citation type="journal article" date="2016" name="Nat. Chem. Biol.">
        <title>The molecular basis of polysaccharide cleavage by lytic polysaccharide monooxygenases.</title>
        <authorList>
            <person name="Frandsen K.E."/>
            <person name="Simmons T.J."/>
            <person name="Dupree P."/>
            <person name="Poulsen J.C."/>
            <person name="Hemsworth G.R."/>
            <person name="Ciano L."/>
            <person name="Johnston E.M."/>
            <person name="Tovborg M."/>
            <person name="Johansen K.S."/>
            <person name="von Freiesleben P."/>
            <person name="Marmuse L."/>
            <person name="Fort S."/>
            <person name="Cottaz S."/>
            <person name="Driguez H."/>
            <person name="Henrissat B."/>
            <person name="Lenfant N."/>
            <person name="Tuna F."/>
            <person name="Baldansuren A."/>
            <person name="Davies G.J."/>
            <person name="Lo Leggio L."/>
            <person name="Walton P.H."/>
        </authorList>
    </citation>
    <scope>NUCLEOTIDE SEQUENCE [GENOMIC DNA]</scope>
    <scope>X-RAY CRYSTALLOGRAPHY (1.28 ANGSTROMS) OF 20-254 IN COMPLEX WITH COPPER AND OLIGOSACCHARIDES</scope>
    <scope>DISULFIDE BONDS</scope>
    <scope>GLYCOSYLATION AT ASN-52</scope>
    <scope>FUNCTION</scope>
    <scope>CATALYTIC ACTIVITY</scope>
    <source>
        <strain>MS02030</strain>
    </source>
</reference>
<reference key="3">
    <citation type="journal article" date="2023" name="Nat. Commun.">
        <title>A seven-transmembrane methyltransferase catalysing N-terminal histidine methylation of lytic polysaccharide monooxygenases.</title>
        <authorList>
            <person name="Batth T.S."/>
            <person name="Simonsen J.L."/>
            <person name="Hernandez-Rollan C."/>
            <person name="Brander S."/>
            <person name="Morth J.P."/>
            <person name="Johansen K.S."/>
            <person name="Noerholm M.H.H."/>
            <person name="Hoof J.B."/>
            <person name="Olsen J.V."/>
        </authorList>
    </citation>
    <scope>METHYLATION AT HIS-20</scope>
</reference>
<reference evidence="25 26" key="4">
    <citation type="journal article" date="2017" name="Carbohydr. Res.">
        <title>Unliganded and substrate bound structures of the cellooligosaccharide active lytic polysaccharide monooxygenase LsAA9A at low pH.</title>
        <authorList>
            <person name="Frandsen K.E."/>
            <person name="Poulsen J.N."/>
            <person name="Tandrup T."/>
            <person name="Lo Leggio L."/>
        </authorList>
    </citation>
    <scope>X-RAY CRYSTALLOGRAPHY (1.58 ANGSTROMS) OF 20-254 IN COMPLEX WITH COPPER AND CELLOHEXAOSE</scope>
    <scope>GLYCOSYLATION AT ASN-52</scope>
    <scope>DISULFIDE BONDS</scope>
</reference>
<reference evidence="27 28 29 30 31 32 33" key="5">
    <citation type="journal article" date="2017" name="Nat. Commun.">
        <title>Structural and electronic determinants of lytic polysaccharide monooxygenase reactivity on polysaccharide substrates.</title>
        <authorList>
            <person name="Simmons T.J."/>
            <person name="Frandsen K.E.H."/>
            <person name="Ciano L."/>
            <person name="Tryfona T."/>
            <person name="Lenfant N."/>
            <person name="Poulsen J.C."/>
            <person name="Wilson L.F.L."/>
            <person name="Tandrup T."/>
            <person name="Tovborg M."/>
            <person name="Schnorr K."/>
            <person name="Johansen K.S."/>
            <person name="Henrissat B."/>
            <person name="Walton P.H."/>
            <person name="Lo Leggio L."/>
            <person name="Dupree P."/>
        </authorList>
    </citation>
    <scope>X-RAY CRYSTALLOGRAPHY (1.33 ANGSTROMS) OF 20-254</scope>
    <scope>DISULFIDE BONDS</scope>
    <scope>GLYCOSYLATION AT ASN-52 AND ASN-129</scope>
    <scope>FUNCTION</scope>
    <scope>CATALYTIC ACTIVITY</scope>
</reference>
<reference evidence="34" key="6">
    <citation type="journal article" date="2020" name="Biochemistry">
        <title>Oligosaccharide Binding and Thermostability of Two Related AA9 Lytic Polysaccharide Monooxygenases.</title>
        <authorList>
            <person name="Tandrup T."/>
            <person name="Tryfona T."/>
            <person name="Frandsen K.E.H."/>
            <person name="Johansen K.S."/>
            <person name="Dupree P."/>
            <person name="Lo Leggio L."/>
        </authorList>
    </citation>
    <scope>X-RAY CRYSTALLOGRAPHY (1.90 ANGSTROMS) OF 20-254 IN COMPLEX WITH OLIGOSACCHARIDES</scope>
    <scope>DISULFIDE BONDS</scope>
    <scope>GLYCOSYLATION AT ASN-52</scope>
</reference>
<reference evidence="35 36" key="7">
    <citation type="journal article" date="2021" name="New Phytol.">
        <title>Inhibition of lytic polysaccharide monooxygenase by natural plant extracts.</title>
        <authorList>
            <person name="Tokin R."/>
            <person name="Frandsen K.E.H."/>
            <person name="Ipsen J.O."/>
            <person name="Lo Leggio L."/>
            <person name="Poojary M.M."/>
            <person name="Berrin J.G."/>
            <person name="Grisel S."/>
            <person name="Brander S."/>
            <person name="Jensen P.E."/>
            <person name="Johansen K.S."/>
        </authorList>
    </citation>
    <scope>X-RAY CRYSTALLOGRAPHY (1.40 ANGSTROMS) OF 20-254</scope>
    <scope>DISULFIDE BONDS</scope>
    <scope>FUNCTION</scope>
    <scope>CATALYTIC ACTIVITY</scope>
    <scope>ACTIVITY REGULATION</scope>
    <scope>GLYCOSYLATION AT ASN-52</scope>
</reference>
<reference evidence="38" key="8">
    <citation type="journal article" date="2022" name="Biomolecules">
        <title>Protonation state of an important histidine from high resolution structures of lytic polysaccharide monooxygenases.</title>
        <authorList>
            <person name="Banerjee S."/>
            <person name="Muderspach S.J."/>
            <person name="Tandrup T."/>
            <person name="Frandsen K.E.H."/>
            <person name="Singh R.K."/>
            <person name="Ipsen J.O."/>
            <person name="Hernandez-Rollan C."/>
            <person name="Norholm M.H.H."/>
            <person name="Bjerrum M.J."/>
            <person name="Johansen K.S."/>
            <person name="Lo Leggio L."/>
        </authorList>
    </citation>
    <scope>X-RAY CRYSTALLOGRAPHY (1.09 ANGSTROMS) OF 20-254 IN COMPLEX WITH COPPER</scope>
    <scope>DISULFIDE BONDS</scope>
</reference>
<reference evidence="37 39 40 41 42 43 44 45 46 47 48" key="9">
    <citation type="journal article" date="2022" name="IUCrJ">
        <title>Changes in active-site geometry on X-ray photoreduction of a lytic polysaccharide monooxygenase active-site copper and saccharide binding.</title>
        <authorList>
            <person name="Tandrup T."/>
            <person name="Muderspach S.J."/>
            <person name="Banerjee S."/>
            <person name="Santoni G."/>
            <person name="Ipsen J.O."/>
            <person name="Hernandez-Rollan C."/>
            <person name="Norholm M.H.H."/>
            <person name="Johansen K.S."/>
            <person name="Meilleur F."/>
            <person name="Lo Leggio L."/>
        </authorList>
    </citation>
    <scope>X-RAY CRYSTALLOGRAPHY (1.20 ANGSTROMS) OF 20-254 IN COMPLEX WITH COPPER OLIGOSACCHARIDES</scope>
    <scope>DISULFIDE BONDS</scope>
    <scope>GLYCOSYLATION AT ASN-52</scope>
</reference>
<reference evidence="69" key="10">
    <citation type="journal article" date="2023" name="Acta Crystallogr. F Struct. Biol. Commun.">
        <title>Joint X-ray/neutron structure of Lentinus similis AA9_A at room temperature.</title>
        <authorList>
            <person name="Tandrup T."/>
            <person name="Lo Leggio L."/>
            <person name="Meilleur F."/>
        </authorList>
    </citation>
    <scope>STRUCTURE (2.10 ANGSTROMS) OF 20-254</scope>
    <scope>DISULFIDE BONDS</scope>
</reference>
<sequence>MKYSILGLTALSFVASAAAHTLVWGVWVNGVDQGDGRNIYIRSPPNNNPVKNLTSPDMTCNVDNRVVPKSVPVNAGDTLTFEWYHNTRDDDIIASSHHGPIAVYIAPAASNGQGNVWVKLFEDAYNVTNSTWAVDRLITAHGQHSVVVPHVAPGDYLFRAEIIALHEADSLYSQNPIRGAQFYISCAQITINSSDDSTPLPAGVPFPGAYTDSTPGIQFNIYTTPATSYVAPPPSVWSGALGGSIAQVGDASLE</sequence>
<protein>
    <recommendedName>
        <fullName evidence="13">AA9 family lytic polysaccharide monooxygenase A</fullName>
        <shortName evidence="13">LPMO9A</shortName>
        <ecNumber evidence="4 6 7 8">1.14.99.56</ecNumber>
    </recommendedName>
    <alternativeName>
        <fullName evidence="14">Cellulase LPMO9A</fullName>
    </alternativeName>
    <alternativeName>
        <fullName evidence="14">Endo-beta-1,4-glucanase LPMO9A</fullName>
        <shortName evidence="14">Endoglucanase LPMO9A</shortName>
    </alternativeName>
    <alternativeName>
        <fullName evidence="14">Glycosyl hydrolase 61 family protein LPMO9A</fullName>
    </alternativeName>
</protein>
<proteinExistence type="evidence at protein level"/>
<gene>
    <name evidence="13" type="primary">LPMO9A</name>
</gene>
<comment type="function">
    <text evidence="4 6 7">Lytic polysaccharide monooxygenase (LPMO) that depolymerizes crystalline and amorphous polysaccharides via the oxidation of scissile alpha- or beta-(1-4)-glycosidic bonds, yielding C1 or C4 oxidation product (PubMed:26928935, PubMed:29057953, PubMed:32818374). Catalysis by LPMOs requires the reduction of the active-site copper from Cu(II) to Cu(I) by a reducing agent and H(2)O(2) or O(2) as a cosubstrate (PubMed:26928935, PubMed:29057953). Is able to cleave phosphoric acid swollen cellulose (PASC) in the presence of a reducing agent, yielding a range of cellooligosaccharides dominated by cellobiose and cellotriose (PubMed:26928935). Activity is less sensitive to the reducing agent potential when cleaving xylan, suggesting that distinct catalytic mechanisms exist for xylan and glucan cleavage (PubMed:29057953).</text>
</comment>
<comment type="catalytic activity">
    <reaction evidence="4 6 7 8">
        <text>[(1-&gt;4)-beta-D-glucosyl]n+m + reduced acceptor + O2 = 4-dehydro-beta-D-glucosyl-[(1-&gt;4)-beta-D-glucosyl]n-1 + [(1-&gt;4)-beta-D-glucosyl]m + acceptor + H2O.</text>
        <dbReference type="EC" id="1.14.99.56"/>
    </reaction>
</comment>
<comment type="cofactor">
    <cofactor evidence="4 5 6 7 8 9 10">
        <name>Cu(2+)</name>
        <dbReference type="ChEBI" id="CHEBI:29036"/>
    </cofactor>
    <text evidence="4 5 6 7 8 9 10">Binds 1 copper ion per subunit.</text>
</comment>
<comment type="activity regulation">
    <text evidence="8">The polyphenol cinnamtannin B1 contained in methanolic extract of Cinnamomum cassia (cinnamon) acts as an inhibitor of catalytic activity.</text>
</comment>
<comment type="subcellular location">
    <subcellularLocation>
        <location evidence="15">Secreted</location>
    </subcellularLocation>
</comment>
<comment type="PTM">
    <text evidence="12">The catalytically essential N-terminal histidine His-20 is post-translationally modified by methylation to prevent protonation of the histidine side chain, and protect the critical active site of the enzyme from oxidative damage.</text>
</comment>
<comment type="biotechnology">
    <text evidence="1">Lignocellulose is the most abundant polymeric composite on Earth and is a recalcitrant but promising renewable substrate for industrial biotechnology applications. Together with cellobiose dehydrogenases (CDHs) an enzymatic system capable of oxidative cellulose cleavage is formed, which increases the efficiency of cellulases and put LPMOs at focus of biofuel research.</text>
</comment>
<comment type="similarity">
    <text evidence="14">Belongs to the polysaccharide monooxygenase AA9 family.</text>
</comment>